<evidence type="ECO:0000255" key="1">
    <source>
        <dbReference type="HAMAP-Rule" id="MF_01197"/>
    </source>
</evidence>
<gene>
    <name evidence="1" type="primary">sepF</name>
    <name type="ordered locus">Teth39_0869</name>
</gene>
<dbReference type="EMBL" id="CP000924">
    <property type="protein sequence ID" value="ABY94525.1"/>
    <property type="molecule type" value="Genomic_DNA"/>
</dbReference>
<dbReference type="RefSeq" id="WP_003867666.1">
    <property type="nucleotide sequence ID" value="NC_010321.1"/>
</dbReference>
<dbReference type="SMR" id="B0K8R2"/>
<dbReference type="STRING" id="340099.Teth39_0869"/>
<dbReference type="KEGG" id="tpd:Teth39_0869"/>
<dbReference type="eggNOG" id="COG1799">
    <property type="taxonomic scope" value="Bacteria"/>
</dbReference>
<dbReference type="HOGENOM" id="CLU_078499_4_0_9"/>
<dbReference type="Proteomes" id="UP000002156">
    <property type="component" value="Chromosome"/>
</dbReference>
<dbReference type="GO" id="GO:0005737">
    <property type="term" value="C:cytoplasm"/>
    <property type="evidence" value="ECO:0007669"/>
    <property type="project" value="UniProtKB-SubCell"/>
</dbReference>
<dbReference type="GO" id="GO:0000917">
    <property type="term" value="P:division septum assembly"/>
    <property type="evidence" value="ECO:0007669"/>
    <property type="project" value="UniProtKB-KW"/>
</dbReference>
<dbReference type="GO" id="GO:0043093">
    <property type="term" value="P:FtsZ-dependent cytokinesis"/>
    <property type="evidence" value="ECO:0007669"/>
    <property type="project" value="UniProtKB-UniRule"/>
</dbReference>
<dbReference type="Gene3D" id="3.30.110.150">
    <property type="entry name" value="SepF-like protein"/>
    <property type="match status" value="1"/>
</dbReference>
<dbReference type="HAMAP" id="MF_01197">
    <property type="entry name" value="SepF"/>
    <property type="match status" value="1"/>
</dbReference>
<dbReference type="InterPro" id="IPR023052">
    <property type="entry name" value="Cell_div_SepF"/>
</dbReference>
<dbReference type="InterPro" id="IPR007561">
    <property type="entry name" value="Cell_div_SepF/SepF-rel"/>
</dbReference>
<dbReference type="InterPro" id="IPR038594">
    <property type="entry name" value="SepF-like_sf"/>
</dbReference>
<dbReference type="PANTHER" id="PTHR35798">
    <property type="entry name" value="CELL DIVISION PROTEIN SEPF"/>
    <property type="match status" value="1"/>
</dbReference>
<dbReference type="PANTHER" id="PTHR35798:SF1">
    <property type="entry name" value="CELL DIVISION PROTEIN SEPF"/>
    <property type="match status" value="1"/>
</dbReference>
<dbReference type="Pfam" id="PF04472">
    <property type="entry name" value="SepF"/>
    <property type="match status" value="1"/>
</dbReference>
<sequence>MSSKMIDKLMSFFGIDEPEEEKEEVDSLQPVIPYDRKPKIVNIHTQPQVKVLILKPEKFEQVMNICNELKNKKPVIVDLQKMDKNEAQRVVDFLSGAAYALNGEIKKISGYIFLVAPENFDITGDIKDEVNSLYNLN</sequence>
<accession>B0K8R2</accession>
<keyword id="KW-0131">Cell cycle</keyword>
<keyword id="KW-0132">Cell division</keyword>
<keyword id="KW-0963">Cytoplasm</keyword>
<keyword id="KW-1185">Reference proteome</keyword>
<keyword id="KW-0717">Septation</keyword>
<feature type="chain" id="PRO_1000138480" description="Cell division protein SepF">
    <location>
        <begin position="1"/>
        <end position="137"/>
    </location>
</feature>
<comment type="function">
    <text evidence="1">Cell division protein that is part of the divisome complex and is recruited early to the Z-ring. Probably stimulates Z-ring formation, perhaps through the cross-linking of FtsZ protofilaments. Its function overlaps with FtsA.</text>
</comment>
<comment type="subunit">
    <text evidence="1">Homodimer. Interacts with FtsZ.</text>
</comment>
<comment type="subcellular location">
    <subcellularLocation>
        <location evidence="1">Cytoplasm</location>
    </subcellularLocation>
    <text evidence="1">Localizes to the division site, in a FtsZ-dependent manner.</text>
</comment>
<comment type="similarity">
    <text evidence="1">Belongs to the SepF family.</text>
</comment>
<proteinExistence type="inferred from homology"/>
<name>SEPF_THEP3</name>
<organism>
    <name type="scientific">Thermoanaerobacter pseudethanolicus (strain ATCC 33223 / 39E)</name>
    <name type="common">Clostridium thermohydrosulfuricum</name>
    <dbReference type="NCBI Taxonomy" id="340099"/>
    <lineage>
        <taxon>Bacteria</taxon>
        <taxon>Bacillati</taxon>
        <taxon>Bacillota</taxon>
        <taxon>Clostridia</taxon>
        <taxon>Thermoanaerobacterales</taxon>
        <taxon>Thermoanaerobacteraceae</taxon>
        <taxon>Thermoanaerobacter</taxon>
    </lineage>
</organism>
<reference key="1">
    <citation type="submission" date="2008-01" db="EMBL/GenBank/DDBJ databases">
        <title>Complete sequence of Thermoanaerobacter pseudethanolicus 39E.</title>
        <authorList>
            <person name="Copeland A."/>
            <person name="Lucas S."/>
            <person name="Lapidus A."/>
            <person name="Barry K."/>
            <person name="Glavina del Rio T."/>
            <person name="Dalin E."/>
            <person name="Tice H."/>
            <person name="Pitluck S."/>
            <person name="Bruce D."/>
            <person name="Goodwin L."/>
            <person name="Saunders E."/>
            <person name="Brettin T."/>
            <person name="Detter J.C."/>
            <person name="Han C."/>
            <person name="Schmutz J."/>
            <person name="Larimer F."/>
            <person name="Land M."/>
            <person name="Hauser L."/>
            <person name="Kyrpides N."/>
            <person name="Lykidis A."/>
            <person name="Hemme C."/>
            <person name="Fields M.W."/>
            <person name="He Z."/>
            <person name="Zhou J."/>
            <person name="Richardson P."/>
        </authorList>
    </citation>
    <scope>NUCLEOTIDE SEQUENCE [LARGE SCALE GENOMIC DNA]</scope>
    <source>
        <strain>ATCC 33223 / DSM 2355 / 39E</strain>
    </source>
</reference>
<protein>
    <recommendedName>
        <fullName evidence="1">Cell division protein SepF</fullName>
    </recommendedName>
</protein>